<reference key="1">
    <citation type="journal article" date="2011" name="PLoS Genet.">
        <title>Genomic analysis of the necrotrophic fungal pathogens Sclerotinia sclerotiorum and Botrytis cinerea.</title>
        <authorList>
            <person name="Amselem J."/>
            <person name="Cuomo C.A."/>
            <person name="van Kan J.A.L."/>
            <person name="Viaud M."/>
            <person name="Benito E.P."/>
            <person name="Couloux A."/>
            <person name="Coutinho P.M."/>
            <person name="de Vries R.P."/>
            <person name="Dyer P.S."/>
            <person name="Fillinger S."/>
            <person name="Fournier E."/>
            <person name="Gout L."/>
            <person name="Hahn M."/>
            <person name="Kohn L."/>
            <person name="Lapalu N."/>
            <person name="Plummer K.M."/>
            <person name="Pradier J.-M."/>
            <person name="Quevillon E."/>
            <person name="Sharon A."/>
            <person name="Simon A."/>
            <person name="ten Have A."/>
            <person name="Tudzynski B."/>
            <person name="Tudzynski P."/>
            <person name="Wincker P."/>
            <person name="Andrew M."/>
            <person name="Anthouard V."/>
            <person name="Beever R.E."/>
            <person name="Beffa R."/>
            <person name="Benoit I."/>
            <person name="Bouzid O."/>
            <person name="Brault B."/>
            <person name="Chen Z."/>
            <person name="Choquer M."/>
            <person name="Collemare J."/>
            <person name="Cotton P."/>
            <person name="Danchin E.G."/>
            <person name="Da Silva C."/>
            <person name="Gautier A."/>
            <person name="Giraud C."/>
            <person name="Giraud T."/>
            <person name="Gonzalez C."/>
            <person name="Grossetete S."/>
            <person name="Gueldener U."/>
            <person name="Henrissat B."/>
            <person name="Howlett B.J."/>
            <person name="Kodira C."/>
            <person name="Kretschmer M."/>
            <person name="Lappartient A."/>
            <person name="Leroch M."/>
            <person name="Levis C."/>
            <person name="Mauceli E."/>
            <person name="Neuveglise C."/>
            <person name="Oeser B."/>
            <person name="Pearson M."/>
            <person name="Poulain J."/>
            <person name="Poussereau N."/>
            <person name="Quesneville H."/>
            <person name="Rascle C."/>
            <person name="Schumacher J."/>
            <person name="Segurens B."/>
            <person name="Sexton A."/>
            <person name="Silva E."/>
            <person name="Sirven C."/>
            <person name="Soanes D.M."/>
            <person name="Talbot N.J."/>
            <person name="Templeton M."/>
            <person name="Yandava C."/>
            <person name="Yarden O."/>
            <person name="Zeng Q."/>
            <person name="Rollins J.A."/>
            <person name="Lebrun M.-H."/>
            <person name="Dickman M."/>
        </authorList>
    </citation>
    <scope>NUCLEOTIDE SEQUENCE [LARGE SCALE GENOMIC DNA]</scope>
    <source>
        <strain>ATCC 18683 / 1980 / Ss-1</strain>
    </source>
</reference>
<proteinExistence type="inferred from homology"/>
<organism>
    <name type="scientific">Sclerotinia sclerotiorum (strain ATCC 18683 / 1980 / Ss-1)</name>
    <name type="common">White mold</name>
    <name type="synonym">Whetzelinia sclerotiorum</name>
    <dbReference type="NCBI Taxonomy" id="665079"/>
    <lineage>
        <taxon>Eukaryota</taxon>
        <taxon>Fungi</taxon>
        <taxon>Dikarya</taxon>
        <taxon>Ascomycota</taxon>
        <taxon>Pezizomycotina</taxon>
        <taxon>Leotiomycetes</taxon>
        <taxon>Helotiales</taxon>
        <taxon>Sclerotiniaceae</taxon>
        <taxon>Sclerotinia</taxon>
    </lineage>
</organism>
<dbReference type="EMBL" id="CH476622">
    <property type="protein sequence ID" value="EDN96179.1"/>
    <property type="molecule type" value="Genomic_DNA"/>
</dbReference>
<dbReference type="RefSeq" id="XP_001596911.1">
    <property type="nucleotide sequence ID" value="XM_001596861.1"/>
</dbReference>
<dbReference type="FunCoup" id="A7E727">
    <property type="interactions" value="119"/>
</dbReference>
<dbReference type="STRING" id="665079.A7E727"/>
<dbReference type="EnsemblFungi" id="EDN96179">
    <property type="protein sequence ID" value="EDN96179"/>
    <property type="gene ID" value="SS1G_01103"/>
</dbReference>
<dbReference type="GeneID" id="5493696"/>
<dbReference type="KEGG" id="ssl:SS1G_01103"/>
<dbReference type="eggNOG" id="KOG3783">
    <property type="taxonomic scope" value="Eukaryota"/>
</dbReference>
<dbReference type="HOGENOM" id="CLU_014926_1_0_1"/>
<dbReference type="InParanoid" id="A7E727"/>
<dbReference type="OMA" id="AFHSDIY"/>
<dbReference type="Proteomes" id="UP000001312">
    <property type="component" value="Unassembled WGS sequence"/>
</dbReference>
<dbReference type="GO" id="GO:0005737">
    <property type="term" value="C:cytoplasm"/>
    <property type="evidence" value="ECO:0007669"/>
    <property type="project" value="UniProtKB-SubCell"/>
</dbReference>
<dbReference type="GO" id="GO:0005634">
    <property type="term" value="C:nucleus"/>
    <property type="evidence" value="ECO:0007669"/>
    <property type="project" value="UniProtKB-SubCell"/>
</dbReference>
<dbReference type="InterPro" id="IPR019412">
    <property type="entry name" value="Iml2/TPR_39"/>
</dbReference>
<dbReference type="PANTHER" id="PTHR31859">
    <property type="entry name" value="TETRATRICOPEPTIDE REPEAT PROTEIN 39 FAMILY MEMBER"/>
    <property type="match status" value="1"/>
</dbReference>
<dbReference type="PANTHER" id="PTHR31859:SF1">
    <property type="entry name" value="TETRATRICOPEPTIDE REPEAT PROTEIN 39C"/>
    <property type="match status" value="1"/>
</dbReference>
<dbReference type="Pfam" id="PF10300">
    <property type="entry name" value="Iml2-TPR_39"/>
    <property type="match status" value="1"/>
</dbReference>
<keyword id="KW-0963">Cytoplasm</keyword>
<keyword id="KW-0539">Nucleus</keyword>
<keyword id="KW-0597">Phosphoprotein</keyword>
<keyword id="KW-1185">Reference proteome</keyword>
<gene>
    <name type="primary">iml2</name>
    <name type="ORF">SS1G_01103</name>
</gene>
<name>IML2_SCLS1</name>
<comment type="function">
    <text evidence="1">Inclusion body (IB) resident protein that interacts strongly with lipid droplet (LD) proteins. Involved in LD-mediated IB clearing after protein folding stress, probably by enabling access to the IBs of an LD-stored soluble sterol derivative that acts as a chaperone in inclusion clearing.</text>
</comment>
<comment type="subunit">
    <text evidence="1">Interacts with lipid droplet proteins.</text>
</comment>
<comment type="subcellular location">
    <subcellularLocation>
        <location evidence="1">Cytoplasm</location>
    </subcellularLocation>
    <subcellularLocation>
        <location evidence="1">Nucleus</location>
    </subcellularLocation>
    <text evidence="1">Localized exclusively in cytoplasmic inclusion bodies under protein folding stress conditions.</text>
</comment>
<comment type="similarity">
    <text evidence="2">Belongs to the IML2 family.</text>
</comment>
<protein>
    <recommendedName>
        <fullName>Inclusion body clearance protein iml2</fullName>
    </recommendedName>
</protein>
<sequence length="645" mass="72846">MSRWFKSAVKATPAMVAESEEQHLRDVEAAMLKLLNDDIEEADKLLKKHDSSYHHLGRGISGFLSAMMGVEKDLLKEAAVILQDAENKSWDDMKKAQKDSTAFQSNIYPQGTEYLLCYSVAQLTSAITAVLSGSITEAVKGFYKLRKAYLTLDGILEVENKYLEKIAHSSTTSLSSRTPSHKSSMAALTVDEIAHRTADLSVGDLDEKMLDPNNPYPNISRPPSPPSVTNPYDIDPELAARVFTNRTDIFIHSGVRLCCGLLLLVFSMIENPIFNKILYIVGFKGDRERGTRLLWQATRYQNFNSAIAALALLGYYNGLVGFCDILPTDDAADDNPTGYPKNKCQALLVDMQSRYPHSKLWKLEEARMLSYKQDLKGALVILEENSKSKMKQITMINTFEMALTTLFIHEYEKSATAWINCSEQSAWSPTLYFYIAGISYVELYRNTRLSDPAAAEVHKKKAIEFILKAPPLAGKQKVMAKQLPFDIYIVSKVGKWEQRAKAWGVDLVDAIGPSPFVEMIYFWNGVKKSGTVELEKCLDLLKKERMTCPEKCNEDEEDVAIHLLLRGSCCSWREKDLPPGGDSTSGEKMSEKKLLEYRREKLMDCEEKLLKLHSWPQTYVFETRMSFKISTSLLTVKRHKGLMGF</sequence>
<feature type="chain" id="PRO_0000333357" description="Inclusion body clearance protein iml2">
    <location>
        <begin position="1"/>
        <end position="645"/>
    </location>
</feature>
<accession>A7E727</accession>
<evidence type="ECO:0000250" key="1">
    <source>
        <dbReference type="UniProtKB" id="P47031"/>
    </source>
</evidence>
<evidence type="ECO:0000305" key="2"/>